<dbReference type="EMBL" id="AY926373">
    <property type="protein sequence ID" value="AAY23216.1"/>
    <property type="molecule type" value="Genomic_DNA"/>
</dbReference>
<dbReference type="SMR" id="Q508N0"/>
<dbReference type="GO" id="GO:0005743">
    <property type="term" value="C:mitochondrial inner membrane"/>
    <property type="evidence" value="ECO:0007669"/>
    <property type="project" value="UniProtKB-SubCell"/>
</dbReference>
<dbReference type="GO" id="GO:0045275">
    <property type="term" value="C:respiratory chain complex III"/>
    <property type="evidence" value="ECO:0007669"/>
    <property type="project" value="InterPro"/>
</dbReference>
<dbReference type="GO" id="GO:0046872">
    <property type="term" value="F:metal ion binding"/>
    <property type="evidence" value="ECO:0007669"/>
    <property type="project" value="UniProtKB-KW"/>
</dbReference>
<dbReference type="GO" id="GO:0008121">
    <property type="term" value="F:ubiquinol-cytochrome-c reductase activity"/>
    <property type="evidence" value="ECO:0007669"/>
    <property type="project" value="InterPro"/>
</dbReference>
<dbReference type="GO" id="GO:0006122">
    <property type="term" value="P:mitochondrial electron transport, ubiquinol to cytochrome c"/>
    <property type="evidence" value="ECO:0007669"/>
    <property type="project" value="TreeGrafter"/>
</dbReference>
<dbReference type="CDD" id="cd00290">
    <property type="entry name" value="cytochrome_b_C"/>
    <property type="match status" value="1"/>
</dbReference>
<dbReference type="CDD" id="cd00284">
    <property type="entry name" value="Cytochrome_b_N"/>
    <property type="match status" value="1"/>
</dbReference>
<dbReference type="FunFam" id="1.20.810.10:FF:000002">
    <property type="entry name" value="Cytochrome b"/>
    <property type="match status" value="1"/>
</dbReference>
<dbReference type="Gene3D" id="1.20.810.10">
    <property type="entry name" value="Cytochrome Bc1 Complex, Chain C"/>
    <property type="match status" value="1"/>
</dbReference>
<dbReference type="InterPro" id="IPR005798">
    <property type="entry name" value="Cyt_b/b6_C"/>
</dbReference>
<dbReference type="InterPro" id="IPR036150">
    <property type="entry name" value="Cyt_b/b6_C_sf"/>
</dbReference>
<dbReference type="InterPro" id="IPR005797">
    <property type="entry name" value="Cyt_b/b6_N"/>
</dbReference>
<dbReference type="InterPro" id="IPR027387">
    <property type="entry name" value="Cytb/b6-like_sf"/>
</dbReference>
<dbReference type="InterPro" id="IPR030689">
    <property type="entry name" value="Cytochrome_b"/>
</dbReference>
<dbReference type="InterPro" id="IPR048260">
    <property type="entry name" value="Cytochrome_b_C_euk/bac"/>
</dbReference>
<dbReference type="InterPro" id="IPR048259">
    <property type="entry name" value="Cytochrome_b_N_euk/bac"/>
</dbReference>
<dbReference type="InterPro" id="IPR016174">
    <property type="entry name" value="Di-haem_cyt_TM"/>
</dbReference>
<dbReference type="PANTHER" id="PTHR19271">
    <property type="entry name" value="CYTOCHROME B"/>
    <property type="match status" value="1"/>
</dbReference>
<dbReference type="PANTHER" id="PTHR19271:SF16">
    <property type="entry name" value="CYTOCHROME B"/>
    <property type="match status" value="1"/>
</dbReference>
<dbReference type="Pfam" id="PF00032">
    <property type="entry name" value="Cytochrom_B_C"/>
    <property type="match status" value="1"/>
</dbReference>
<dbReference type="Pfam" id="PF00033">
    <property type="entry name" value="Cytochrome_B"/>
    <property type="match status" value="1"/>
</dbReference>
<dbReference type="PIRSF" id="PIRSF038885">
    <property type="entry name" value="COB"/>
    <property type="match status" value="1"/>
</dbReference>
<dbReference type="SUPFAM" id="SSF81648">
    <property type="entry name" value="a domain/subunit of cytochrome bc1 complex (Ubiquinol-cytochrome c reductase)"/>
    <property type="match status" value="1"/>
</dbReference>
<dbReference type="SUPFAM" id="SSF81342">
    <property type="entry name" value="Transmembrane di-heme cytochromes"/>
    <property type="match status" value="1"/>
</dbReference>
<dbReference type="PROSITE" id="PS51003">
    <property type="entry name" value="CYTB_CTER"/>
    <property type="match status" value="1"/>
</dbReference>
<dbReference type="PROSITE" id="PS51002">
    <property type="entry name" value="CYTB_NTER"/>
    <property type="match status" value="1"/>
</dbReference>
<organism>
    <name type="scientific">Dipodomys venustus</name>
    <name type="common">Narrow-faced kangaroo rat</name>
    <dbReference type="NCBI Taxonomy" id="323375"/>
    <lineage>
        <taxon>Eukaryota</taxon>
        <taxon>Metazoa</taxon>
        <taxon>Chordata</taxon>
        <taxon>Craniata</taxon>
        <taxon>Vertebrata</taxon>
        <taxon>Euteleostomi</taxon>
        <taxon>Mammalia</taxon>
        <taxon>Eutheria</taxon>
        <taxon>Euarchontoglires</taxon>
        <taxon>Glires</taxon>
        <taxon>Rodentia</taxon>
        <taxon>Castorimorpha</taxon>
        <taxon>Heteromyidae</taxon>
        <taxon>Dipodomyinae</taxon>
        <taxon>Dipodomys</taxon>
    </lineage>
</organism>
<feature type="chain" id="PRO_0000255047" description="Cytochrome b">
    <location>
        <begin position="1"/>
        <end position="379"/>
    </location>
</feature>
<feature type="transmembrane region" description="Helical" evidence="2">
    <location>
        <begin position="33"/>
        <end position="53"/>
    </location>
</feature>
<feature type="transmembrane region" description="Helical" evidence="2">
    <location>
        <begin position="77"/>
        <end position="98"/>
    </location>
</feature>
<feature type="transmembrane region" description="Helical" evidence="2">
    <location>
        <begin position="113"/>
        <end position="133"/>
    </location>
</feature>
<feature type="transmembrane region" description="Helical" evidence="2">
    <location>
        <begin position="178"/>
        <end position="198"/>
    </location>
</feature>
<feature type="transmembrane region" description="Helical" evidence="2">
    <location>
        <begin position="226"/>
        <end position="246"/>
    </location>
</feature>
<feature type="transmembrane region" description="Helical" evidence="2">
    <location>
        <begin position="288"/>
        <end position="308"/>
    </location>
</feature>
<feature type="transmembrane region" description="Helical" evidence="2">
    <location>
        <begin position="320"/>
        <end position="340"/>
    </location>
</feature>
<feature type="transmembrane region" description="Helical" evidence="2">
    <location>
        <begin position="347"/>
        <end position="367"/>
    </location>
</feature>
<feature type="binding site" description="axial binding residue" evidence="2">
    <location>
        <position position="83"/>
    </location>
    <ligand>
        <name>heme b</name>
        <dbReference type="ChEBI" id="CHEBI:60344"/>
        <label>b562</label>
    </ligand>
    <ligandPart>
        <name>Fe</name>
        <dbReference type="ChEBI" id="CHEBI:18248"/>
    </ligandPart>
</feature>
<feature type="binding site" description="axial binding residue" evidence="2">
    <location>
        <position position="97"/>
    </location>
    <ligand>
        <name>heme b</name>
        <dbReference type="ChEBI" id="CHEBI:60344"/>
        <label>b566</label>
    </ligand>
    <ligandPart>
        <name>Fe</name>
        <dbReference type="ChEBI" id="CHEBI:18248"/>
    </ligandPart>
</feature>
<feature type="binding site" description="axial binding residue" evidence="2">
    <location>
        <position position="182"/>
    </location>
    <ligand>
        <name>heme b</name>
        <dbReference type="ChEBI" id="CHEBI:60344"/>
        <label>b562</label>
    </ligand>
    <ligandPart>
        <name>Fe</name>
        <dbReference type="ChEBI" id="CHEBI:18248"/>
    </ligandPart>
</feature>
<feature type="binding site" description="axial binding residue" evidence="2">
    <location>
        <position position="196"/>
    </location>
    <ligand>
        <name>heme b</name>
        <dbReference type="ChEBI" id="CHEBI:60344"/>
        <label>b566</label>
    </ligand>
    <ligandPart>
        <name>Fe</name>
        <dbReference type="ChEBI" id="CHEBI:18248"/>
    </ligandPart>
</feature>
<feature type="binding site" evidence="2">
    <location>
        <position position="201"/>
    </location>
    <ligand>
        <name>a ubiquinone</name>
        <dbReference type="ChEBI" id="CHEBI:16389"/>
    </ligand>
</feature>
<sequence length="379" mass="42878">MTILRKTHPLMKMVNHAFIDLPTPANISGWWNFGSLLGLCLIIQIASGLFLAMHYTPDTLTAFSSVTHICRDVNYGWLIRYMHANGASLFFICLYLHIGRGIYYGSYSYTETWNIGIILLFLTMATAFMGYVLPWGQMSFWGATVITNLLSAIPYIGTDLVEWIWGGFSVDKATLNRFFAFHFILPFIIAATAMVHLLFLHETGSNNPLGIPSDCDKIPFHPYYTTKDFLGMVLLLAFFFTMVLFFPDLLGDPDNYSPANPLNTPPHIKPEWYFLFAYAILRSIPNKLGGVIALIMSILVLALLPHIQTSKQRSLMFRPISQFLFWLLVADVLALTWIGGQPVEPPFIIIGQIASLLYFTIILILMPIAGIIENKMLKW</sequence>
<name>CYB_DIPVE</name>
<accession>Q508N0</accession>
<comment type="function">
    <text evidence="2">Component of the ubiquinol-cytochrome c reductase complex (complex III or cytochrome b-c1 complex) that is part of the mitochondrial respiratory chain. The b-c1 complex mediates electron transfer from ubiquinol to cytochrome c. Contributes to the generation of a proton gradient across the mitochondrial membrane that is then used for ATP synthesis.</text>
</comment>
<comment type="cofactor">
    <cofactor evidence="2">
        <name>heme b</name>
        <dbReference type="ChEBI" id="CHEBI:60344"/>
    </cofactor>
    <text evidence="2">Binds 2 heme b groups non-covalently.</text>
</comment>
<comment type="subunit">
    <text evidence="2">The cytochrome bc1 complex contains 11 subunits: 3 respiratory subunits (MT-CYB, CYC1 and UQCRFS1), 2 core proteins (UQCRC1 and UQCRC2) and 6 low-molecular weight proteins (UQCRH/QCR6, UQCRB/QCR7, UQCRQ/QCR8, UQCR10/QCR9, UQCR11/QCR10 and a cleavage product of UQCRFS1). This cytochrome bc1 complex then forms a dimer.</text>
</comment>
<comment type="subcellular location">
    <subcellularLocation>
        <location evidence="2">Mitochondrion inner membrane</location>
        <topology evidence="2">Multi-pass membrane protein</topology>
    </subcellularLocation>
</comment>
<comment type="miscellaneous">
    <text evidence="1">Heme 1 (or BL or b562) is low-potential and absorbs at about 562 nm, and heme 2 (or BH or b566) is high-potential and absorbs at about 566 nm.</text>
</comment>
<comment type="similarity">
    <text evidence="3 4">Belongs to the cytochrome b family.</text>
</comment>
<comment type="caution">
    <text evidence="2">The full-length protein contains only eight transmembrane helices, not nine as predicted by bioinformatics tools.</text>
</comment>
<evidence type="ECO:0000250" key="1"/>
<evidence type="ECO:0000250" key="2">
    <source>
        <dbReference type="UniProtKB" id="P00157"/>
    </source>
</evidence>
<evidence type="ECO:0000255" key="3">
    <source>
        <dbReference type="PROSITE-ProRule" id="PRU00967"/>
    </source>
</evidence>
<evidence type="ECO:0000255" key="4">
    <source>
        <dbReference type="PROSITE-ProRule" id="PRU00968"/>
    </source>
</evidence>
<reference key="1">
    <citation type="journal article" date="2005" name="J. Mammal.">
        <title>Phylogenetics of the new world rodent family Heteromyidae.</title>
        <authorList>
            <person name="Alexander L.F."/>
            <person name="Riddle B.R."/>
        </authorList>
    </citation>
    <scope>NUCLEOTIDE SEQUENCE [GENOMIC DNA]</scope>
    <source>
        <strain>Isolate LVT 2046</strain>
    </source>
</reference>
<keyword id="KW-0249">Electron transport</keyword>
<keyword id="KW-0349">Heme</keyword>
<keyword id="KW-0408">Iron</keyword>
<keyword id="KW-0472">Membrane</keyword>
<keyword id="KW-0479">Metal-binding</keyword>
<keyword id="KW-0496">Mitochondrion</keyword>
<keyword id="KW-0999">Mitochondrion inner membrane</keyword>
<keyword id="KW-0679">Respiratory chain</keyword>
<keyword id="KW-0812">Transmembrane</keyword>
<keyword id="KW-1133">Transmembrane helix</keyword>
<keyword id="KW-0813">Transport</keyword>
<keyword id="KW-0830">Ubiquinone</keyword>
<protein>
    <recommendedName>
        <fullName>Cytochrome b</fullName>
    </recommendedName>
    <alternativeName>
        <fullName>Complex III subunit 3</fullName>
    </alternativeName>
    <alternativeName>
        <fullName>Complex III subunit III</fullName>
    </alternativeName>
    <alternativeName>
        <fullName>Cytochrome b-c1 complex subunit 3</fullName>
    </alternativeName>
    <alternativeName>
        <fullName>Ubiquinol-cytochrome-c reductase complex cytochrome b subunit</fullName>
    </alternativeName>
</protein>
<gene>
    <name type="primary">MT-CYB</name>
    <name type="synonym">COB</name>
    <name type="synonym">CYTB</name>
    <name type="synonym">MTCYB</name>
</gene>
<proteinExistence type="inferred from homology"/>
<geneLocation type="mitochondrion"/>